<dbReference type="EC" id="3.4.19.12"/>
<dbReference type="EMBL" id="AY191612">
    <property type="protein sequence ID" value="AAP23261.1"/>
    <property type="molecule type" value="Genomic_DNA"/>
</dbReference>
<dbReference type="RefSeq" id="NP_001038961.1">
    <property type="nucleotide sequence ID" value="NM_001045496.1"/>
</dbReference>
<dbReference type="BMRB" id="P60051"/>
<dbReference type="SMR" id="P60051"/>
<dbReference type="FunCoup" id="P60051">
    <property type="interactions" value="3415"/>
</dbReference>
<dbReference type="STRING" id="9598.ENSPTRP00000055013"/>
<dbReference type="MEROPS" id="C19.015"/>
<dbReference type="PaxDb" id="9598-ENSPTRP00000055013"/>
<dbReference type="Ensembl" id="ENSPTRT00000009757.7">
    <property type="protein sequence ID" value="ENSPTRP00000055013.3"/>
    <property type="gene ID" value="ENSPTRG00000009815.7"/>
</dbReference>
<dbReference type="GeneID" id="455325"/>
<dbReference type="KEGG" id="ptr:455325"/>
<dbReference type="CTD" id="9097"/>
<dbReference type="VGNC" id="VGNC:8873">
    <property type="gene designation" value="USP14"/>
</dbReference>
<dbReference type="eggNOG" id="KOG1872">
    <property type="taxonomic scope" value="Eukaryota"/>
</dbReference>
<dbReference type="GeneTree" id="ENSGT00390000009615"/>
<dbReference type="HOGENOM" id="CLU_017549_2_1_1"/>
<dbReference type="InParanoid" id="P60051"/>
<dbReference type="OrthoDB" id="6441at9604"/>
<dbReference type="TreeFam" id="TF314494"/>
<dbReference type="Proteomes" id="UP000002277">
    <property type="component" value="Chromosome 18"/>
</dbReference>
<dbReference type="Bgee" id="ENSPTRG00000009815">
    <property type="expression patterns" value="Expressed in hindlimb stylopod muscle and 21 other cell types or tissues"/>
</dbReference>
<dbReference type="GO" id="GO:0009986">
    <property type="term" value="C:cell surface"/>
    <property type="evidence" value="ECO:0007669"/>
    <property type="project" value="Ensembl"/>
</dbReference>
<dbReference type="GO" id="GO:0031410">
    <property type="term" value="C:cytoplasmic vesicle"/>
    <property type="evidence" value="ECO:0007669"/>
    <property type="project" value="Ensembl"/>
</dbReference>
<dbReference type="GO" id="GO:0005783">
    <property type="term" value="C:endoplasmic reticulum"/>
    <property type="evidence" value="ECO:0007669"/>
    <property type="project" value="Ensembl"/>
</dbReference>
<dbReference type="GO" id="GO:0098978">
    <property type="term" value="C:glutamatergic synapse"/>
    <property type="evidence" value="ECO:0007669"/>
    <property type="project" value="Ensembl"/>
</dbReference>
<dbReference type="GO" id="GO:0005730">
    <property type="term" value="C:nucleolus"/>
    <property type="evidence" value="ECO:0007669"/>
    <property type="project" value="Ensembl"/>
</dbReference>
<dbReference type="GO" id="GO:0005886">
    <property type="term" value="C:plasma membrane"/>
    <property type="evidence" value="ECO:0007669"/>
    <property type="project" value="UniProtKB-SubCell"/>
</dbReference>
<dbReference type="GO" id="GO:0099523">
    <property type="term" value="C:presynaptic cytosol"/>
    <property type="evidence" value="ECO:0007669"/>
    <property type="project" value="Ensembl"/>
</dbReference>
<dbReference type="GO" id="GO:0000502">
    <property type="term" value="C:proteasome complex"/>
    <property type="evidence" value="ECO:0007669"/>
    <property type="project" value="UniProtKB-KW"/>
</dbReference>
<dbReference type="GO" id="GO:0004843">
    <property type="term" value="F:cysteine-type deubiquitinase activity"/>
    <property type="evidence" value="ECO:0000318"/>
    <property type="project" value="GO_Central"/>
</dbReference>
<dbReference type="GO" id="GO:0004866">
    <property type="term" value="F:endopeptidase inhibitor activity"/>
    <property type="evidence" value="ECO:0007669"/>
    <property type="project" value="Ensembl"/>
</dbReference>
<dbReference type="GO" id="GO:0070628">
    <property type="term" value="F:proteasome binding"/>
    <property type="evidence" value="ECO:0000318"/>
    <property type="project" value="GO_Central"/>
</dbReference>
<dbReference type="GO" id="GO:0007268">
    <property type="term" value="P:chemical synaptic transmission"/>
    <property type="evidence" value="ECO:0007669"/>
    <property type="project" value="Ensembl"/>
</dbReference>
<dbReference type="GO" id="GO:0045087">
    <property type="term" value="P:innate immune response"/>
    <property type="evidence" value="ECO:0007669"/>
    <property type="project" value="UniProtKB-KW"/>
</dbReference>
<dbReference type="GO" id="GO:1904293">
    <property type="term" value="P:negative regulation of ERAD pathway"/>
    <property type="evidence" value="ECO:0000318"/>
    <property type="project" value="GO_Central"/>
</dbReference>
<dbReference type="GO" id="GO:2000059">
    <property type="term" value="P:negative regulation of ubiquitin-dependent protein catabolic process"/>
    <property type="evidence" value="ECO:0007669"/>
    <property type="project" value="Ensembl"/>
</dbReference>
<dbReference type="GO" id="GO:0043161">
    <property type="term" value="P:proteasome-mediated ubiquitin-dependent protein catabolic process"/>
    <property type="evidence" value="ECO:0007669"/>
    <property type="project" value="InterPro"/>
</dbReference>
<dbReference type="GO" id="GO:0071108">
    <property type="term" value="P:protein K48-linked deubiquitination"/>
    <property type="evidence" value="ECO:0007669"/>
    <property type="project" value="Ensembl"/>
</dbReference>
<dbReference type="GO" id="GO:0050920">
    <property type="term" value="P:regulation of chemotaxis"/>
    <property type="evidence" value="ECO:0007669"/>
    <property type="project" value="Ensembl"/>
</dbReference>
<dbReference type="CDD" id="cd02657">
    <property type="entry name" value="Peptidase_C19A"/>
    <property type="match status" value="1"/>
</dbReference>
<dbReference type="CDD" id="cd16104">
    <property type="entry name" value="Ubl_USP14_like"/>
    <property type="match status" value="1"/>
</dbReference>
<dbReference type="FunFam" id="3.10.20.90:FF:000119">
    <property type="entry name" value="Ubiquitin carboxyl-terminal hydrolase 14"/>
    <property type="match status" value="1"/>
</dbReference>
<dbReference type="FunFam" id="3.90.70.10:FF:000032">
    <property type="entry name" value="Ubiquitin carboxyl-terminal hydrolase 14"/>
    <property type="match status" value="1"/>
</dbReference>
<dbReference type="Gene3D" id="3.90.70.10">
    <property type="entry name" value="Cysteine proteinases"/>
    <property type="match status" value="1"/>
</dbReference>
<dbReference type="Gene3D" id="3.10.20.90">
    <property type="entry name" value="Phosphatidylinositol 3-kinase Catalytic Subunit, Chain A, domain 1"/>
    <property type="match status" value="1"/>
</dbReference>
<dbReference type="InterPro" id="IPR038765">
    <property type="entry name" value="Papain-like_cys_pep_sf"/>
</dbReference>
<dbReference type="InterPro" id="IPR001394">
    <property type="entry name" value="Peptidase_C19_UCH"/>
</dbReference>
<dbReference type="InterPro" id="IPR000626">
    <property type="entry name" value="Ubiquitin-like_dom"/>
</dbReference>
<dbReference type="InterPro" id="IPR029071">
    <property type="entry name" value="Ubiquitin-like_domsf"/>
</dbReference>
<dbReference type="InterPro" id="IPR019954">
    <property type="entry name" value="Ubiquitin_CS"/>
</dbReference>
<dbReference type="InterPro" id="IPR044635">
    <property type="entry name" value="UBP14-like"/>
</dbReference>
<dbReference type="InterPro" id="IPR018200">
    <property type="entry name" value="USP_CS"/>
</dbReference>
<dbReference type="InterPro" id="IPR028889">
    <property type="entry name" value="USP_dom"/>
</dbReference>
<dbReference type="PANTHER" id="PTHR43982">
    <property type="entry name" value="UBIQUITIN CARBOXYL-TERMINAL HYDROLASE"/>
    <property type="match status" value="1"/>
</dbReference>
<dbReference type="PANTHER" id="PTHR43982:SF1">
    <property type="entry name" value="UBIQUITIN CARBOXYL-TERMINAL HYDROLASE 14"/>
    <property type="match status" value="1"/>
</dbReference>
<dbReference type="Pfam" id="PF00443">
    <property type="entry name" value="UCH"/>
    <property type="match status" value="1"/>
</dbReference>
<dbReference type="SMART" id="SM00213">
    <property type="entry name" value="UBQ"/>
    <property type="match status" value="1"/>
</dbReference>
<dbReference type="SUPFAM" id="SSF54001">
    <property type="entry name" value="Cysteine proteinases"/>
    <property type="match status" value="1"/>
</dbReference>
<dbReference type="SUPFAM" id="SSF54236">
    <property type="entry name" value="Ubiquitin-like"/>
    <property type="match status" value="1"/>
</dbReference>
<dbReference type="PROSITE" id="PS00299">
    <property type="entry name" value="UBIQUITIN_1"/>
    <property type="match status" value="1"/>
</dbReference>
<dbReference type="PROSITE" id="PS50053">
    <property type="entry name" value="UBIQUITIN_2"/>
    <property type="match status" value="1"/>
</dbReference>
<dbReference type="PROSITE" id="PS00972">
    <property type="entry name" value="USP_1"/>
    <property type="match status" value="1"/>
</dbReference>
<dbReference type="PROSITE" id="PS00973">
    <property type="entry name" value="USP_2"/>
    <property type="match status" value="1"/>
</dbReference>
<dbReference type="PROSITE" id="PS50235">
    <property type="entry name" value="USP_3"/>
    <property type="match status" value="1"/>
</dbReference>
<sequence length="493" mass="55941">MPLYSVTVKWGKEKFEGVELNTDEPPMVFKAQLFALTGVQPARQKVMVKGGTLKDDDWGNIKIKNGMTLLMMGSADALPEEPSAKTVFVEDMTEEQLASAMELPCGLTNLGNTCYMNATVQCIRSVPELKDALKRYAGALRASGEMASAQYITAALRDLFDSMDKTSSSIPPIILLQFLHMAFPQFAEKGEQGQYLQQDANECWIQMMRVLQQKLEAIEDDSVKETDSSSASAATPSKKKSLIDQFFGVEFETTMKCTESEEEEVTKGKENQLQLSCFINQEVKYLFTGLKLRLQEEITKQSPTLQRNALYIKSSKISRLPAYLTIQMVRFFYKEKESVNAKVLKDVKFPLMLDMYELCTPELQEKMVSFRSKFKDLEDKKVNQQPNTSDKKSSPQKEVKYEPFSFADDIGSNNCGYYDLQAVLTHQGRSSSSGHYVSWVKRKQDEWIKFDDDKVSIVTPEDILRLSGGGDWHIAYVLLYGPRRVEIMEEESE</sequence>
<organism>
    <name type="scientific">Pan troglodytes</name>
    <name type="common">Chimpanzee</name>
    <dbReference type="NCBI Taxonomy" id="9598"/>
    <lineage>
        <taxon>Eukaryota</taxon>
        <taxon>Metazoa</taxon>
        <taxon>Chordata</taxon>
        <taxon>Craniata</taxon>
        <taxon>Vertebrata</taxon>
        <taxon>Euteleostomi</taxon>
        <taxon>Mammalia</taxon>
        <taxon>Eutheria</taxon>
        <taxon>Euarchontoglires</taxon>
        <taxon>Primates</taxon>
        <taxon>Haplorrhini</taxon>
        <taxon>Catarrhini</taxon>
        <taxon>Hominidae</taxon>
        <taxon>Pan</taxon>
    </lineage>
</organism>
<feature type="chain" id="PRO_0000080638" description="Ubiquitin carboxyl-terminal hydrolase 14">
    <location>
        <begin position="1"/>
        <end position="493"/>
    </location>
</feature>
<feature type="domain" description="Ubiquitin-like" evidence="4">
    <location>
        <begin position="4"/>
        <end position="80"/>
    </location>
</feature>
<feature type="domain" description="USP">
    <location>
        <begin position="105"/>
        <end position="483"/>
    </location>
</feature>
<feature type="active site" description="Nucleophile" evidence="5 6">
    <location>
        <position position="114"/>
    </location>
</feature>
<feature type="active site" description="Proton acceptor" evidence="5 6">
    <location>
        <position position="435"/>
    </location>
</feature>
<feature type="modified residue" description="Phosphothreonine" evidence="2">
    <location>
        <position position="52"/>
    </location>
</feature>
<feature type="modified residue" description="Phosphoserine" evidence="2">
    <location>
        <position position="143"/>
    </location>
</feature>
<feature type="modified residue" description="Phosphoserine" evidence="3">
    <location>
        <position position="148"/>
    </location>
</feature>
<feature type="modified residue" description="Phosphothreonine" evidence="2">
    <location>
        <position position="235"/>
    </location>
</feature>
<feature type="modified residue" description="Phosphoserine" evidence="2">
    <location>
        <position position="237"/>
    </location>
</feature>
<feature type="modified residue" description="Phosphoserine" evidence="2">
    <location>
        <position position="302"/>
    </location>
</feature>
<feature type="modified residue" description="Phosphoserine" evidence="2">
    <location>
        <position position="432"/>
    </location>
</feature>
<feature type="modified residue" description="N6-acetyllysine" evidence="2">
    <location>
        <position position="449"/>
    </location>
</feature>
<keyword id="KW-0007">Acetylation</keyword>
<keyword id="KW-1003">Cell membrane</keyword>
<keyword id="KW-0963">Cytoplasm</keyword>
<keyword id="KW-0378">Hydrolase</keyword>
<keyword id="KW-0391">Immunity</keyword>
<keyword id="KW-0399">Innate immunity</keyword>
<keyword id="KW-0472">Membrane</keyword>
<keyword id="KW-0597">Phosphoprotein</keyword>
<keyword id="KW-0645">Protease</keyword>
<keyword id="KW-0647">Proteasome</keyword>
<keyword id="KW-1185">Reference proteome</keyword>
<keyword id="KW-0788">Thiol protease</keyword>
<keyword id="KW-0833">Ubl conjugation pathway</keyword>
<comment type="function">
    <text evidence="2 3">Proteasome-associated deubiquitinase which releases ubiquitin from the proteasome targeted ubiquitinated proteins. Ensures the regeneration of ubiquitin at the proteasome. Is a reversibly associated subunit of the proteasome and a large fraction of proteasome-free protein exists within the cell. Required for the degradation of the chemokine receptor CXCR4 which is critical for CXCL12-induced cell chemotaxis. Also serves as a physiological inhibitor of endoplasmic reticulum-associated degradation (ERAD) under the non-stressed condition by inhibiting the degradation of unfolded endoplasmic reticulum proteins via interaction with ERN1 (By similarity). Indispensable for synaptic development and function at neuromuscular junctions (NMJs) (By similarity). Plays a role in the innate immune defense against viruses by stabilizing the viral DNA sensor CGAS and thus inhibiting its autophagic degradation (By similarity). Inhibits OPTN-mediated selective autophagic degradation of KDM4D and thereby negatively regulates H3K9me2 and H3K9me3 (By similarity).</text>
</comment>
<comment type="catalytic activity">
    <reaction>
        <text>Thiol-dependent hydrolysis of ester, thioester, amide, peptide and isopeptide bonds formed by the C-terminal Gly of ubiquitin (a 76-residue protein attached to proteins as an intracellular targeting signal).</text>
        <dbReference type="EC" id="3.4.19.12"/>
    </reaction>
</comment>
<comment type="subunit">
    <text evidence="2">Homodimer (Potential). Associates with the 26S proteasome. Interacts with FANCC, CXCR4 and ERN1. Interacts with TRIM14; this interaction recruits USP14 to cleave ubiquitin chains of CGAS and KDM4D.</text>
</comment>
<comment type="subcellular location">
    <subcellularLocation>
        <location evidence="1">Cytoplasm</location>
    </subcellularLocation>
    <subcellularLocation>
        <location evidence="1">Cell membrane</location>
        <topology evidence="1">Peripheral membrane protein</topology>
    </subcellularLocation>
</comment>
<comment type="similarity">
    <text evidence="7">Belongs to the peptidase C19 family. USP14/UBP6 subfamily.</text>
</comment>
<gene>
    <name type="primary">USP14</name>
</gene>
<reference key="1">
    <citation type="journal article" date="2004" name="Genomics">
        <title>Inversion, duplication, and changes in gene context are associated with human chromosome 18 evolution.</title>
        <authorList>
            <person name="Dennehey B.K."/>
            <person name="Gutches D.G."/>
            <person name="McConkey E.H."/>
            <person name="Krauter K.S."/>
        </authorList>
    </citation>
    <scope>NUCLEOTIDE SEQUENCE [GENOMIC DNA]</scope>
</reference>
<name>UBP14_PANTR</name>
<accession>P60051</accession>
<evidence type="ECO:0000250" key="1"/>
<evidence type="ECO:0000250" key="2">
    <source>
        <dbReference type="UniProtKB" id="P54578"/>
    </source>
</evidence>
<evidence type="ECO:0000250" key="3">
    <source>
        <dbReference type="UniProtKB" id="Q9JMA1"/>
    </source>
</evidence>
<evidence type="ECO:0000255" key="4">
    <source>
        <dbReference type="PROSITE-ProRule" id="PRU00214"/>
    </source>
</evidence>
<evidence type="ECO:0000255" key="5">
    <source>
        <dbReference type="PROSITE-ProRule" id="PRU10092"/>
    </source>
</evidence>
<evidence type="ECO:0000255" key="6">
    <source>
        <dbReference type="PROSITE-ProRule" id="PRU10093"/>
    </source>
</evidence>
<evidence type="ECO:0000305" key="7"/>
<protein>
    <recommendedName>
        <fullName>Ubiquitin carboxyl-terminal hydrolase 14</fullName>
        <ecNumber>3.4.19.12</ecNumber>
    </recommendedName>
    <alternativeName>
        <fullName>Deubiquitinating enzyme 14</fullName>
    </alternativeName>
    <alternativeName>
        <fullName>Ubiquitin thioesterase 14</fullName>
    </alternativeName>
    <alternativeName>
        <fullName>Ubiquitin-specific-processing protease 14</fullName>
    </alternativeName>
</protein>
<proteinExistence type="inferred from homology"/>